<reference key="1">
    <citation type="submission" date="2008-05" db="EMBL/GenBank/DDBJ databases">
        <title>Complete sequence of Shigella boydii serotype 18 strain BS512.</title>
        <authorList>
            <person name="Rasko D.A."/>
            <person name="Rosovitz M."/>
            <person name="Maurelli A.T."/>
            <person name="Myers G."/>
            <person name="Seshadri R."/>
            <person name="Cer R."/>
            <person name="Jiang L."/>
            <person name="Ravel J."/>
            <person name="Sebastian Y."/>
        </authorList>
    </citation>
    <scope>NUCLEOTIDE SEQUENCE [LARGE SCALE GENOMIC DNA]</scope>
    <source>
        <strain>CDC 3083-94 / BS512</strain>
    </source>
</reference>
<organism>
    <name type="scientific">Shigella boydii serotype 18 (strain CDC 3083-94 / BS512)</name>
    <dbReference type="NCBI Taxonomy" id="344609"/>
    <lineage>
        <taxon>Bacteria</taxon>
        <taxon>Pseudomonadati</taxon>
        <taxon>Pseudomonadota</taxon>
        <taxon>Gammaproteobacteria</taxon>
        <taxon>Enterobacterales</taxon>
        <taxon>Enterobacteriaceae</taxon>
        <taxon>Shigella</taxon>
    </lineage>
</organism>
<name>LPTE_SHIB3</name>
<accession>B2TU78</accession>
<gene>
    <name evidence="1" type="primary">lptE</name>
    <name type="synonym">rlpB</name>
    <name type="ordered locus">SbBS512_E0610</name>
</gene>
<proteinExistence type="inferred from homology"/>
<comment type="function">
    <text evidence="1">Together with LptD, is involved in the assembly of lipopolysaccharide (LPS) at the surface of the outer membrane. Required for the proper assembly of LptD. Binds LPS and may serve as the LPS recognition site at the outer membrane.</text>
</comment>
<comment type="subunit">
    <text evidence="1">Component of the lipopolysaccharide transport and assembly complex. Interacts with LptD.</text>
</comment>
<comment type="subcellular location">
    <subcellularLocation>
        <location evidence="1">Cell outer membrane</location>
        <topology evidence="1">Lipid-anchor</topology>
    </subcellularLocation>
</comment>
<comment type="similarity">
    <text evidence="1">Belongs to the LptE lipoprotein family.</text>
</comment>
<sequence>MRYLATLLLSLAVLITAGCGWHLRDTTQVPSTMKVMILDSGDPNGPLSRAVRNQLRLNGVELLDKETTRKDVPSLRLGKVSIAKDTASVFRNGQTAEYQMIMTVNATVLIPGRDIYPISAKVFRSFFDNPQMALAKDNEQDMIVKEMYDRAAEQLIRKLPSIRAADIRSDEEQTSTTTDTPATPARVSTTLGN</sequence>
<protein>
    <recommendedName>
        <fullName evidence="1">LPS-assembly lipoprotein LptE</fullName>
    </recommendedName>
</protein>
<dbReference type="EMBL" id="CP001063">
    <property type="protein sequence ID" value="ACD08653.1"/>
    <property type="molecule type" value="Genomic_DNA"/>
</dbReference>
<dbReference type="RefSeq" id="WP_001269673.1">
    <property type="nucleotide sequence ID" value="NC_010658.1"/>
</dbReference>
<dbReference type="SMR" id="B2TU78"/>
<dbReference type="STRING" id="344609.SbBS512_E0610"/>
<dbReference type="GeneID" id="93776841"/>
<dbReference type="KEGG" id="sbc:SbBS512_E0610"/>
<dbReference type="HOGENOM" id="CLU_103309_1_1_6"/>
<dbReference type="Proteomes" id="UP000001030">
    <property type="component" value="Chromosome"/>
</dbReference>
<dbReference type="GO" id="GO:0009279">
    <property type="term" value="C:cell outer membrane"/>
    <property type="evidence" value="ECO:0007669"/>
    <property type="project" value="UniProtKB-SubCell"/>
</dbReference>
<dbReference type="GO" id="GO:1990351">
    <property type="term" value="C:transporter complex"/>
    <property type="evidence" value="ECO:0007669"/>
    <property type="project" value="TreeGrafter"/>
</dbReference>
<dbReference type="GO" id="GO:0001530">
    <property type="term" value="F:lipopolysaccharide binding"/>
    <property type="evidence" value="ECO:0007669"/>
    <property type="project" value="TreeGrafter"/>
</dbReference>
<dbReference type="GO" id="GO:0043165">
    <property type="term" value="P:Gram-negative-bacterium-type cell outer membrane assembly"/>
    <property type="evidence" value="ECO:0007669"/>
    <property type="project" value="UniProtKB-UniRule"/>
</dbReference>
<dbReference type="GO" id="GO:0015920">
    <property type="term" value="P:lipopolysaccharide transport"/>
    <property type="evidence" value="ECO:0007669"/>
    <property type="project" value="TreeGrafter"/>
</dbReference>
<dbReference type="FunFam" id="3.30.160.150:FF:000001">
    <property type="entry name" value="LPS-assembly lipoprotein LptE"/>
    <property type="match status" value="1"/>
</dbReference>
<dbReference type="Gene3D" id="3.30.160.150">
    <property type="entry name" value="Lipoprotein like domain"/>
    <property type="match status" value="1"/>
</dbReference>
<dbReference type="HAMAP" id="MF_01186">
    <property type="entry name" value="LPS_assembly_LptE"/>
    <property type="match status" value="1"/>
</dbReference>
<dbReference type="InterPro" id="IPR007485">
    <property type="entry name" value="LPS_assembly_LptE"/>
</dbReference>
<dbReference type="NCBIfam" id="NF008062">
    <property type="entry name" value="PRK10796.1"/>
    <property type="match status" value="1"/>
</dbReference>
<dbReference type="PANTHER" id="PTHR38098">
    <property type="entry name" value="LPS-ASSEMBLY LIPOPROTEIN LPTE"/>
    <property type="match status" value="1"/>
</dbReference>
<dbReference type="PANTHER" id="PTHR38098:SF1">
    <property type="entry name" value="LPS-ASSEMBLY LIPOPROTEIN LPTE"/>
    <property type="match status" value="1"/>
</dbReference>
<dbReference type="Pfam" id="PF04390">
    <property type="entry name" value="LptE"/>
    <property type="match status" value="1"/>
</dbReference>
<dbReference type="PROSITE" id="PS51257">
    <property type="entry name" value="PROKAR_LIPOPROTEIN"/>
    <property type="match status" value="1"/>
</dbReference>
<evidence type="ECO:0000255" key="1">
    <source>
        <dbReference type="HAMAP-Rule" id="MF_01186"/>
    </source>
</evidence>
<evidence type="ECO:0000256" key="2">
    <source>
        <dbReference type="SAM" id="MobiDB-lite"/>
    </source>
</evidence>
<feature type="signal peptide" evidence="1">
    <location>
        <begin position="1"/>
        <end position="18"/>
    </location>
</feature>
<feature type="chain" id="PRO_1000138282" description="LPS-assembly lipoprotein LptE">
    <location>
        <begin position="19"/>
        <end position="193"/>
    </location>
</feature>
<feature type="region of interest" description="Disordered" evidence="2">
    <location>
        <begin position="166"/>
        <end position="193"/>
    </location>
</feature>
<feature type="compositionally biased region" description="Low complexity" evidence="2">
    <location>
        <begin position="174"/>
        <end position="186"/>
    </location>
</feature>
<feature type="lipid moiety-binding region" description="N-palmitoyl cysteine" evidence="1">
    <location>
        <position position="19"/>
    </location>
</feature>
<feature type="lipid moiety-binding region" description="S-diacylglycerol cysteine" evidence="1">
    <location>
        <position position="19"/>
    </location>
</feature>
<keyword id="KW-0998">Cell outer membrane</keyword>
<keyword id="KW-0449">Lipoprotein</keyword>
<keyword id="KW-0472">Membrane</keyword>
<keyword id="KW-0564">Palmitate</keyword>
<keyword id="KW-1185">Reference proteome</keyword>
<keyword id="KW-0732">Signal</keyword>